<accession>Q71WN9</accession>
<proteinExistence type="inferred from homology"/>
<name>GLYA_LISMF</name>
<keyword id="KW-0028">Amino-acid biosynthesis</keyword>
<keyword id="KW-0963">Cytoplasm</keyword>
<keyword id="KW-0554">One-carbon metabolism</keyword>
<keyword id="KW-0663">Pyridoxal phosphate</keyword>
<keyword id="KW-0808">Transferase</keyword>
<reference key="1">
    <citation type="journal article" date="2004" name="Nucleic Acids Res.">
        <title>Whole genome comparisons of serotype 4b and 1/2a strains of the food-borne pathogen Listeria monocytogenes reveal new insights into the core genome components of this species.</title>
        <authorList>
            <person name="Nelson K.E."/>
            <person name="Fouts D.E."/>
            <person name="Mongodin E.F."/>
            <person name="Ravel J."/>
            <person name="DeBoy R.T."/>
            <person name="Kolonay J.F."/>
            <person name="Rasko D.A."/>
            <person name="Angiuoli S.V."/>
            <person name="Gill S.R."/>
            <person name="Paulsen I.T."/>
            <person name="Peterson J.D."/>
            <person name="White O."/>
            <person name="Nelson W.C."/>
            <person name="Nierman W.C."/>
            <person name="Beanan M.J."/>
            <person name="Brinkac L.M."/>
            <person name="Daugherty S.C."/>
            <person name="Dodson R.J."/>
            <person name="Durkin A.S."/>
            <person name="Madupu R."/>
            <person name="Haft D.H."/>
            <person name="Selengut J."/>
            <person name="Van Aken S.E."/>
            <person name="Khouri H.M."/>
            <person name="Fedorova N."/>
            <person name="Forberger H.A."/>
            <person name="Tran B."/>
            <person name="Kathariou S."/>
            <person name="Wonderling L.D."/>
            <person name="Uhlich G.A."/>
            <person name="Bayles D.O."/>
            <person name="Luchansky J.B."/>
            <person name="Fraser C.M."/>
        </authorList>
    </citation>
    <scope>NUCLEOTIDE SEQUENCE [LARGE SCALE GENOMIC DNA]</scope>
    <source>
        <strain>F2365</strain>
    </source>
</reference>
<sequence length="413" mass="45093">MVYLQKQDKEVFDAIKLELGRQRANIELIASENFVSEQVMEAMGSVLTNKYAEGYPGKRYYGGCEFVDIVEDLARDRAKKLFGAEYANVQPHSGAQANMAVYHTVLEPGDTVLGMNLSHGGHLTHGSPVNFSGVLYNFVEYGVREDTKEIDYDIVREAALKHKPKMIVAGASAYPRKIDFAKFREIADEVGAYLMVDMAHIAGLVAAGLHQNPVPYADFTTTTTHKTLRGPRGGMILAKAEWEQKLNKSIFPGIQGGPLMHVIAAKAVAFGEALQPEFTAYCEQIIRNSKKLAETLQANDVAVLTGGSDNHLLLIDLKPLGLTGKAAEKVLDEVGITVNKNTIPFETESPFVTSGIRVGVAAVTTRGFDEVAIEKVGVLISEVLHNLENEEVLADVKARVATLTNEYPLYPSL</sequence>
<dbReference type="EC" id="2.1.2.1" evidence="1"/>
<dbReference type="EMBL" id="AE017262">
    <property type="protein sequence ID" value="AAT05277.1"/>
    <property type="molecule type" value="Genomic_DNA"/>
</dbReference>
<dbReference type="RefSeq" id="WP_003726682.1">
    <property type="nucleotide sequence ID" value="NC_002973.6"/>
</dbReference>
<dbReference type="SMR" id="Q71WN9"/>
<dbReference type="KEGG" id="lmf:LMOf2365_2512"/>
<dbReference type="HOGENOM" id="CLU_022477_2_1_9"/>
<dbReference type="UniPathway" id="UPA00193"/>
<dbReference type="UniPathway" id="UPA00288">
    <property type="reaction ID" value="UER01023"/>
</dbReference>
<dbReference type="GO" id="GO:0005829">
    <property type="term" value="C:cytosol"/>
    <property type="evidence" value="ECO:0007669"/>
    <property type="project" value="TreeGrafter"/>
</dbReference>
<dbReference type="GO" id="GO:0004372">
    <property type="term" value="F:glycine hydroxymethyltransferase activity"/>
    <property type="evidence" value="ECO:0007669"/>
    <property type="project" value="UniProtKB-UniRule"/>
</dbReference>
<dbReference type="GO" id="GO:0030170">
    <property type="term" value="F:pyridoxal phosphate binding"/>
    <property type="evidence" value="ECO:0007669"/>
    <property type="project" value="UniProtKB-UniRule"/>
</dbReference>
<dbReference type="GO" id="GO:0019264">
    <property type="term" value="P:glycine biosynthetic process from serine"/>
    <property type="evidence" value="ECO:0007669"/>
    <property type="project" value="UniProtKB-UniRule"/>
</dbReference>
<dbReference type="GO" id="GO:0035999">
    <property type="term" value="P:tetrahydrofolate interconversion"/>
    <property type="evidence" value="ECO:0007669"/>
    <property type="project" value="UniProtKB-UniRule"/>
</dbReference>
<dbReference type="CDD" id="cd00378">
    <property type="entry name" value="SHMT"/>
    <property type="match status" value="1"/>
</dbReference>
<dbReference type="FunFam" id="3.40.640.10:FF:000001">
    <property type="entry name" value="Serine hydroxymethyltransferase"/>
    <property type="match status" value="1"/>
</dbReference>
<dbReference type="Gene3D" id="3.90.1150.10">
    <property type="entry name" value="Aspartate Aminotransferase, domain 1"/>
    <property type="match status" value="1"/>
</dbReference>
<dbReference type="Gene3D" id="3.40.640.10">
    <property type="entry name" value="Type I PLP-dependent aspartate aminotransferase-like (Major domain)"/>
    <property type="match status" value="1"/>
</dbReference>
<dbReference type="HAMAP" id="MF_00051">
    <property type="entry name" value="SHMT"/>
    <property type="match status" value="1"/>
</dbReference>
<dbReference type="InterPro" id="IPR015424">
    <property type="entry name" value="PyrdxlP-dep_Trfase"/>
</dbReference>
<dbReference type="InterPro" id="IPR015421">
    <property type="entry name" value="PyrdxlP-dep_Trfase_major"/>
</dbReference>
<dbReference type="InterPro" id="IPR015422">
    <property type="entry name" value="PyrdxlP-dep_Trfase_small"/>
</dbReference>
<dbReference type="InterPro" id="IPR001085">
    <property type="entry name" value="Ser_HO-MeTrfase"/>
</dbReference>
<dbReference type="InterPro" id="IPR049943">
    <property type="entry name" value="Ser_HO-MeTrfase-like"/>
</dbReference>
<dbReference type="InterPro" id="IPR019798">
    <property type="entry name" value="Ser_HO-MeTrfase_PLP_BS"/>
</dbReference>
<dbReference type="InterPro" id="IPR039429">
    <property type="entry name" value="SHMT-like_dom"/>
</dbReference>
<dbReference type="NCBIfam" id="NF000586">
    <property type="entry name" value="PRK00011.1"/>
    <property type="match status" value="1"/>
</dbReference>
<dbReference type="PANTHER" id="PTHR11680">
    <property type="entry name" value="SERINE HYDROXYMETHYLTRANSFERASE"/>
    <property type="match status" value="1"/>
</dbReference>
<dbReference type="PANTHER" id="PTHR11680:SF35">
    <property type="entry name" value="SERINE HYDROXYMETHYLTRANSFERASE 1"/>
    <property type="match status" value="1"/>
</dbReference>
<dbReference type="Pfam" id="PF00464">
    <property type="entry name" value="SHMT"/>
    <property type="match status" value="1"/>
</dbReference>
<dbReference type="PIRSF" id="PIRSF000412">
    <property type="entry name" value="SHMT"/>
    <property type="match status" value="1"/>
</dbReference>
<dbReference type="SUPFAM" id="SSF53383">
    <property type="entry name" value="PLP-dependent transferases"/>
    <property type="match status" value="1"/>
</dbReference>
<dbReference type="PROSITE" id="PS00096">
    <property type="entry name" value="SHMT"/>
    <property type="match status" value="1"/>
</dbReference>
<gene>
    <name evidence="1" type="primary">glyA</name>
    <name type="ordered locus">LMOf2365_2512</name>
</gene>
<evidence type="ECO:0000255" key="1">
    <source>
        <dbReference type="HAMAP-Rule" id="MF_00051"/>
    </source>
</evidence>
<feature type="chain" id="PRO_0000113600" description="Serine hydroxymethyltransferase">
    <location>
        <begin position="1"/>
        <end position="413"/>
    </location>
</feature>
<feature type="binding site" evidence="1">
    <location>
        <position position="117"/>
    </location>
    <ligand>
        <name>(6S)-5,6,7,8-tetrahydrofolate</name>
        <dbReference type="ChEBI" id="CHEBI:57453"/>
    </ligand>
</feature>
<feature type="binding site" evidence="1">
    <location>
        <begin position="121"/>
        <end position="123"/>
    </location>
    <ligand>
        <name>(6S)-5,6,7,8-tetrahydrofolate</name>
        <dbReference type="ChEBI" id="CHEBI:57453"/>
    </ligand>
</feature>
<feature type="binding site" evidence="1">
    <location>
        <begin position="349"/>
        <end position="351"/>
    </location>
    <ligand>
        <name>(6S)-5,6,7,8-tetrahydrofolate</name>
        <dbReference type="ChEBI" id="CHEBI:57453"/>
    </ligand>
</feature>
<feature type="site" description="Plays an important role in substrate specificity" evidence="1">
    <location>
        <position position="225"/>
    </location>
</feature>
<feature type="modified residue" description="N6-(pyridoxal phosphate)lysine" evidence="1">
    <location>
        <position position="226"/>
    </location>
</feature>
<organism>
    <name type="scientific">Listeria monocytogenes serotype 4b (strain F2365)</name>
    <dbReference type="NCBI Taxonomy" id="265669"/>
    <lineage>
        <taxon>Bacteria</taxon>
        <taxon>Bacillati</taxon>
        <taxon>Bacillota</taxon>
        <taxon>Bacilli</taxon>
        <taxon>Bacillales</taxon>
        <taxon>Listeriaceae</taxon>
        <taxon>Listeria</taxon>
    </lineage>
</organism>
<protein>
    <recommendedName>
        <fullName evidence="1">Serine hydroxymethyltransferase</fullName>
        <shortName evidence="1">SHMT</shortName>
        <shortName evidence="1">Serine methylase</shortName>
        <ecNumber evidence="1">2.1.2.1</ecNumber>
    </recommendedName>
</protein>
<comment type="function">
    <text evidence="1">Catalyzes the reversible interconversion of serine and glycine with tetrahydrofolate (THF) serving as the one-carbon carrier. This reaction serves as the major source of one-carbon groups required for the biosynthesis of purines, thymidylate, methionine, and other important biomolecules. Also exhibits THF-independent aldolase activity toward beta-hydroxyamino acids, producing glycine and aldehydes, via a retro-aldol mechanism.</text>
</comment>
<comment type="catalytic activity">
    <reaction evidence="1">
        <text>(6R)-5,10-methylene-5,6,7,8-tetrahydrofolate + glycine + H2O = (6S)-5,6,7,8-tetrahydrofolate + L-serine</text>
        <dbReference type="Rhea" id="RHEA:15481"/>
        <dbReference type="ChEBI" id="CHEBI:15377"/>
        <dbReference type="ChEBI" id="CHEBI:15636"/>
        <dbReference type="ChEBI" id="CHEBI:33384"/>
        <dbReference type="ChEBI" id="CHEBI:57305"/>
        <dbReference type="ChEBI" id="CHEBI:57453"/>
        <dbReference type="EC" id="2.1.2.1"/>
    </reaction>
</comment>
<comment type="cofactor">
    <cofactor evidence="1">
        <name>pyridoxal 5'-phosphate</name>
        <dbReference type="ChEBI" id="CHEBI:597326"/>
    </cofactor>
</comment>
<comment type="pathway">
    <text evidence="1">One-carbon metabolism; tetrahydrofolate interconversion.</text>
</comment>
<comment type="pathway">
    <text evidence="1">Amino-acid biosynthesis; glycine biosynthesis; glycine from L-serine: step 1/1.</text>
</comment>
<comment type="subunit">
    <text evidence="1">Homodimer.</text>
</comment>
<comment type="subcellular location">
    <subcellularLocation>
        <location evidence="1">Cytoplasm</location>
    </subcellularLocation>
</comment>
<comment type="similarity">
    <text evidence="1">Belongs to the SHMT family.</text>
</comment>